<gene>
    <name evidence="5" type="primary">ERF.C.3</name>
    <name evidence="6" type="ordered locus">Solyc09g066360</name>
</gene>
<dbReference type="EMBL" id="CM001072">
    <property type="status" value="NOT_ANNOTATED_CDS"/>
    <property type="molecule type" value="Genomic_DNA"/>
</dbReference>
<dbReference type="RefSeq" id="XP_004247350.1">
    <property type="nucleotide sequence ID" value="XM_004247302.3"/>
</dbReference>
<dbReference type="SMR" id="A0A3Q7I5Y9"/>
<dbReference type="STRING" id="4081.A0A3Q7I5Y9"/>
<dbReference type="PaxDb" id="4081-Solyc09g066360.1.1"/>
<dbReference type="EnsemblPlants" id="Solyc09g066360.1.1">
    <property type="protein sequence ID" value="Solyc09g066360.1.1.1"/>
    <property type="gene ID" value="Solyc09g066360.1"/>
</dbReference>
<dbReference type="Gramene" id="Solyc09g066360.1.1">
    <property type="protein sequence ID" value="Solyc09g066360.1.1.1"/>
    <property type="gene ID" value="Solyc09g066360.1"/>
</dbReference>
<dbReference type="InParanoid" id="A0A3Q7I5Y9"/>
<dbReference type="OMA" id="NCSPVIE"/>
<dbReference type="OrthoDB" id="670255at2759"/>
<dbReference type="Proteomes" id="UP000004994">
    <property type="component" value="Chromosome 9"/>
</dbReference>
<dbReference type="GO" id="GO:0005634">
    <property type="term" value="C:nucleus"/>
    <property type="evidence" value="ECO:0007669"/>
    <property type="project" value="UniProtKB-SubCell"/>
</dbReference>
<dbReference type="GO" id="GO:0003700">
    <property type="term" value="F:DNA-binding transcription factor activity"/>
    <property type="evidence" value="ECO:0007669"/>
    <property type="project" value="InterPro"/>
</dbReference>
<dbReference type="GO" id="GO:0043565">
    <property type="term" value="F:sequence-specific DNA binding"/>
    <property type="evidence" value="ECO:0000314"/>
    <property type="project" value="UniProtKB"/>
</dbReference>
<dbReference type="GO" id="GO:0006952">
    <property type="term" value="P:defense response"/>
    <property type="evidence" value="ECO:0007669"/>
    <property type="project" value="UniProtKB-KW"/>
</dbReference>
<dbReference type="GO" id="GO:0009873">
    <property type="term" value="P:ethylene-activated signaling pathway"/>
    <property type="evidence" value="ECO:0007669"/>
    <property type="project" value="UniProtKB-KW"/>
</dbReference>
<dbReference type="GO" id="GO:0045893">
    <property type="term" value="P:positive regulation of DNA-templated transcription"/>
    <property type="evidence" value="ECO:0000314"/>
    <property type="project" value="UniProtKB"/>
</dbReference>
<dbReference type="GO" id="GO:0031347">
    <property type="term" value="P:regulation of defense response"/>
    <property type="evidence" value="ECO:0000315"/>
    <property type="project" value="UniProtKB"/>
</dbReference>
<dbReference type="GO" id="GO:0010104">
    <property type="term" value="P:regulation of ethylene-activated signaling pathway"/>
    <property type="evidence" value="ECO:0000315"/>
    <property type="project" value="UniProtKB"/>
</dbReference>
<dbReference type="CDD" id="cd00018">
    <property type="entry name" value="AP2"/>
    <property type="match status" value="1"/>
</dbReference>
<dbReference type="FunFam" id="3.30.730.10:FF:000001">
    <property type="entry name" value="Ethylene-responsive transcription factor 2"/>
    <property type="match status" value="1"/>
</dbReference>
<dbReference type="Gene3D" id="3.30.730.10">
    <property type="entry name" value="AP2/ERF domain"/>
    <property type="match status" value="1"/>
</dbReference>
<dbReference type="InterPro" id="IPR001471">
    <property type="entry name" value="AP2/ERF_dom"/>
</dbReference>
<dbReference type="InterPro" id="IPR036955">
    <property type="entry name" value="AP2/ERF_dom_sf"/>
</dbReference>
<dbReference type="InterPro" id="IPR016177">
    <property type="entry name" value="DNA-bd_dom_sf"/>
</dbReference>
<dbReference type="InterPro" id="IPR044808">
    <property type="entry name" value="ERF_plant"/>
</dbReference>
<dbReference type="PANTHER" id="PTHR31190">
    <property type="entry name" value="DNA-BINDING DOMAIN"/>
    <property type="match status" value="1"/>
</dbReference>
<dbReference type="PANTHER" id="PTHR31190:SF493">
    <property type="entry name" value="ETHYLENE-RESPONSE FACTOR C3"/>
    <property type="match status" value="1"/>
</dbReference>
<dbReference type="Pfam" id="PF00847">
    <property type="entry name" value="AP2"/>
    <property type="match status" value="1"/>
</dbReference>
<dbReference type="PRINTS" id="PR00367">
    <property type="entry name" value="ETHRSPELEMNT"/>
</dbReference>
<dbReference type="SMART" id="SM00380">
    <property type="entry name" value="AP2"/>
    <property type="match status" value="1"/>
</dbReference>
<dbReference type="SUPFAM" id="SSF54171">
    <property type="entry name" value="DNA-binding domain"/>
    <property type="match status" value="1"/>
</dbReference>
<dbReference type="PROSITE" id="PS51032">
    <property type="entry name" value="AP2_ERF"/>
    <property type="match status" value="1"/>
</dbReference>
<organism>
    <name type="scientific">Solanum lycopersicum</name>
    <name type="common">Tomato</name>
    <name type="synonym">Lycopersicon esculentum</name>
    <dbReference type="NCBI Taxonomy" id="4081"/>
    <lineage>
        <taxon>Eukaryota</taxon>
        <taxon>Viridiplantae</taxon>
        <taxon>Streptophyta</taxon>
        <taxon>Embryophyta</taxon>
        <taxon>Tracheophyta</taxon>
        <taxon>Spermatophyta</taxon>
        <taxon>Magnoliopsida</taxon>
        <taxon>eudicotyledons</taxon>
        <taxon>Gunneridae</taxon>
        <taxon>Pentapetalae</taxon>
        <taxon>asterids</taxon>
        <taxon>lamiids</taxon>
        <taxon>Solanales</taxon>
        <taxon>Solanaceae</taxon>
        <taxon>Solanoideae</taxon>
        <taxon>Solaneae</taxon>
        <taxon>Solanum</taxon>
        <taxon>Solanum subgen. Lycopersicon</taxon>
    </lineage>
</organism>
<evidence type="ECO:0000255" key="1">
    <source>
        <dbReference type="PROSITE-ProRule" id="PRU00366"/>
    </source>
</evidence>
<evidence type="ECO:0000256" key="2">
    <source>
        <dbReference type="SAM" id="MobiDB-lite"/>
    </source>
</evidence>
<evidence type="ECO:0000269" key="3">
    <source>
    </source>
</evidence>
<evidence type="ECO:0000269" key="4">
    <source>
    </source>
</evidence>
<evidence type="ECO:0000303" key="5">
    <source>
    </source>
</evidence>
<evidence type="ECO:0000305" key="6"/>
<accession>A0A3Q7I5Y9</accession>
<reference key="1">
    <citation type="journal article" date="2012" name="Nature">
        <title>The tomato genome sequence provides insights into fleshy fruit evolution.</title>
        <authorList>
            <consortium name="Tomato Genome Consortium"/>
        </authorList>
    </citation>
    <scope>NUCLEOTIDE SEQUENCE [LARGE SCALE GENOMIC DNA]</scope>
    <source>
        <strain>cv. Heinz 1706</strain>
    </source>
</reference>
<reference key="2">
    <citation type="journal article" date="2012" name="BMC Plant Biol.">
        <title>Functional analysis and binding affinity of tomato ethylene response factors provide insight on the molecular bases of plant differential responses to ethylene.</title>
        <authorList>
            <person name="Pirrello J."/>
            <person name="Prasad B.C."/>
            <person name="Zhang W."/>
            <person name="Chen K."/>
            <person name="Mila I."/>
            <person name="Zouine M."/>
            <person name="Latche A."/>
            <person name="Pech J.C."/>
            <person name="Ohme-Takagi M."/>
            <person name="Regad F."/>
            <person name="Bouzayen M."/>
        </authorList>
    </citation>
    <scope>FUNCTION</scope>
</reference>
<reference key="3">
    <citation type="journal article" date="2017" name="Plant Cell">
        <title>MYC2 orchestrates a hierarchical transcriptional cascade that regulates jasmonate-mediated plant immunity in tomato.</title>
        <authorList>
            <person name="Du M."/>
            <person name="Zhao J."/>
            <person name="Tzeng D.T.W."/>
            <person name="Liu Y."/>
            <person name="Deng L."/>
            <person name="Yang T."/>
            <person name="Zhai Q."/>
            <person name="Wu F."/>
            <person name="Huang Z."/>
            <person name="Zhou M."/>
            <person name="Wang Q."/>
            <person name="Chen Q."/>
            <person name="Zhong S."/>
            <person name="Li C.B."/>
            <person name="Li C."/>
        </authorList>
    </citation>
    <scope>FUNCTION</scope>
    <scope>INDUCTION</scope>
</reference>
<feature type="chain" id="PRO_0000447551" description="Ethylene-response factor C3">
    <location>
        <begin position="1"/>
        <end position="193"/>
    </location>
</feature>
<feature type="DNA-binding region" description="AP2/ERF" evidence="1">
    <location>
        <begin position="65"/>
        <end position="123"/>
    </location>
</feature>
<feature type="region of interest" description="Disordered" evidence="2">
    <location>
        <begin position="41"/>
        <end position="62"/>
    </location>
</feature>
<feature type="compositionally biased region" description="Basic and acidic residues" evidence="2">
    <location>
        <begin position="49"/>
        <end position="62"/>
    </location>
</feature>
<keyword id="KW-0010">Activator</keyword>
<keyword id="KW-0238">DNA-binding</keyword>
<keyword id="KW-0936">Ethylene signaling pathway</keyword>
<keyword id="KW-0539">Nucleus</keyword>
<keyword id="KW-0611">Plant defense</keyword>
<keyword id="KW-1185">Reference proteome</keyword>
<keyword id="KW-0804">Transcription</keyword>
<keyword id="KW-0805">Transcription regulation</keyword>
<comment type="function">
    <text evidence="3 4">Transcription activator that binds to the GCC-box cis-acting elements found in the promoter regions of ethylene-responsive genes (PubMed:23057995). Acts downstream of MYC2 in the jasmonate-mediated response to Botrytis cinerea infection (PubMed:28733419). With MYC2 forms a transcription module that regulates pathogen-responsive genes (PubMed:28733419).</text>
</comment>
<comment type="subcellular location">
    <subcellularLocation>
        <location evidence="1">Nucleus</location>
    </subcellularLocation>
</comment>
<comment type="induction">
    <text evidence="4">Induced by wounding and infection with the fungal pathogen Botrytis cinerea.</text>
</comment>
<comment type="similarity">
    <text evidence="6">Belongs to the AP2/ERF transcription factor family. ERF subfamily.</text>
</comment>
<sequence length="193" mass="22289">MDYSSRDDLLFHYNSLPFNVNDTQDMLLYNLVAEGSSQETVNSSSSYGIKEEEVTSYEEERKDKNYRGVRKRPWGKYAAEIRDSTRNGVRVWLGTFDNAEEAALAYDQAAFAMRGSMAILNFPVEIVKESLNEMKCRFDGNCSPVIELKKRYSMRRKSVSRKNRARKDVVVFEDLGAEYLEELLISSESITNW</sequence>
<proteinExistence type="evidence at transcript level"/>
<name>ERFC3_SOLLC</name>
<protein>
    <recommendedName>
        <fullName evidence="6">Ethylene-response factor C3</fullName>
        <shortName evidence="5">Sl.ERF.C.3</shortName>
    </recommendedName>
    <alternativeName>
        <fullName evidence="6">Ethylene-responsive element-binding factor C3</fullName>
    </alternativeName>
    <alternativeName>
        <fullName evidence="6">Ethylene-responsive transcription factor C3</fullName>
    </alternativeName>
</protein>